<sequence>MIRRAPFLILLRFCRMGKMACSGYPPFQGRIVLSEMPAHRLAALIRSKEVSALEVAESFIDNIEASDSRICAFLYTDFSYTRDVARRVDEELKSATKLSPLAGVPIAVKDMILTRDMPTTAGSKILEGWIPPYNATVIERISRARMPILGKTNQDEFGMGSSTEYSAYKTTRNPWDLSRTAGGSGGGSSAAVSASQAPLALGTDTGGSIRLPAHCTGTVGIRPTYGSVSRYGVIALASSFDQVGPCSSNILDAALLHEVIAGYDPADAVSIKDQDLNFSQAAYEGANRGISGVRLGFVNPSNWCNSKITDLFGRTLKSLESEGAVLHEVQFPNFDHAVQAYYLIMQAEASSNLSRYDSIRFGPQEMAASASGTVSKTRSIRFGPEVKRRILLGTHILSAGYYDDFYMSAQKIRSLVKRDFAKIFSLVDVLLLPTAPTPAFKLGEKIDHHTSMYKSDTATTPASLAGLPAGSIPMGVIDGLPVGLQIIAPGQFDSRVYSTGAAIEQIIGDIHAMKNTKHNTGQTA</sequence>
<feature type="chain" id="PRO_0000105225" description="Glutamyl-tRNA(Gln) amidotransferase subunit A">
    <location>
        <begin position="1"/>
        <end position="524"/>
    </location>
</feature>
<feature type="active site" description="Charge relay system" evidence="1">
    <location>
        <position position="109"/>
    </location>
</feature>
<feature type="active site" description="Charge relay system" evidence="1">
    <location>
        <position position="184"/>
    </location>
</feature>
<feature type="active site" description="Acyl-ester intermediate" evidence="1">
    <location>
        <position position="208"/>
    </location>
</feature>
<reference key="1">
    <citation type="journal article" date="2003" name="Lancet">
        <title>Sequencing and analysis of the genome of the Whipple's disease bacterium Tropheryma whipplei.</title>
        <authorList>
            <person name="Bentley S.D."/>
            <person name="Maiwald M."/>
            <person name="Murphy L.D."/>
            <person name="Pallen M.J."/>
            <person name="Yeats C.A."/>
            <person name="Dover L.G."/>
            <person name="Norbertczak H.T."/>
            <person name="Besra G.S."/>
            <person name="Quail M.A."/>
            <person name="Harris D.E."/>
            <person name="von Herbay A."/>
            <person name="Goble A."/>
            <person name="Rutter S."/>
            <person name="Squares R."/>
            <person name="Squares S."/>
            <person name="Barrell B.G."/>
            <person name="Parkhill J."/>
            <person name="Relman D.A."/>
        </authorList>
    </citation>
    <scope>NUCLEOTIDE SEQUENCE [LARGE SCALE GENOMIC DNA]</scope>
    <source>
        <strain>TW08/27</strain>
    </source>
</reference>
<gene>
    <name evidence="1" type="primary">gatA</name>
    <name type="ordered locus">TW356</name>
</gene>
<proteinExistence type="inferred from homology"/>
<keyword id="KW-0067">ATP-binding</keyword>
<keyword id="KW-0436">Ligase</keyword>
<keyword id="KW-0547">Nucleotide-binding</keyword>
<keyword id="KW-0648">Protein biosynthesis</keyword>
<dbReference type="EC" id="6.3.5.7" evidence="1"/>
<dbReference type="EMBL" id="BX251411">
    <property type="protein sequence ID" value="CAD67028.1"/>
    <property type="status" value="ALT_INIT"/>
    <property type="molecule type" value="Genomic_DNA"/>
</dbReference>
<dbReference type="SMR" id="Q83HX2"/>
<dbReference type="KEGG" id="tws:TW356"/>
<dbReference type="HOGENOM" id="CLU_009600_0_3_11"/>
<dbReference type="GO" id="GO:0030956">
    <property type="term" value="C:glutamyl-tRNA(Gln) amidotransferase complex"/>
    <property type="evidence" value="ECO:0007669"/>
    <property type="project" value="InterPro"/>
</dbReference>
<dbReference type="GO" id="GO:0005524">
    <property type="term" value="F:ATP binding"/>
    <property type="evidence" value="ECO:0007669"/>
    <property type="project" value="UniProtKB-KW"/>
</dbReference>
<dbReference type="GO" id="GO:0050567">
    <property type="term" value="F:glutaminyl-tRNA synthase (glutamine-hydrolyzing) activity"/>
    <property type="evidence" value="ECO:0007669"/>
    <property type="project" value="UniProtKB-UniRule"/>
</dbReference>
<dbReference type="GO" id="GO:0006412">
    <property type="term" value="P:translation"/>
    <property type="evidence" value="ECO:0007669"/>
    <property type="project" value="UniProtKB-UniRule"/>
</dbReference>
<dbReference type="Gene3D" id="3.90.1300.10">
    <property type="entry name" value="Amidase signature (AS) domain"/>
    <property type="match status" value="1"/>
</dbReference>
<dbReference type="HAMAP" id="MF_00120">
    <property type="entry name" value="GatA"/>
    <property type="match status" value="1"/>
</dbReference>
<dbReference type="InterPro" id="IPR000120">
    <property type="entry name" value="Amidase"/>
</dbReference>
<dbReference type="InterPro" id="IPR020556">
    <property type="entry name" value="Amidase_CS"/>
</dbReference>
<dbReference type="InterPro" id="IPR023631">
    <property type="entry name" value="Amidase_dom"/>
</dbReference>
<dbReference type="InterPro" id="IPR036928">
    <property type="entry name" value="AS_sf"/>
</dbReference>
<dbReference type="InterPro" id="IPR004412">
    <property type="entry name" value="GatA"/>
</dbReference>
<dbReference type="NCBIfam" id="TIGR00132">
    <property type="entry name" value="gatA"/>
    <property type="match status" value="1"/>
</dbReference>
<dbReference type="PANTHER" id="PTHR11895:SF151">
    <property type="entry name" value="GLUTAMYL-TRNA(GLN) AMIDOTRANSFERASE SUBUNIT A"/>
    <property type="match status" value="1"/>
</dbReference>
<dbReference type="PANTHER" id="PTHR11895">
    <property type="entry name" value="TRANSAMIDASE"/>
    <property type="match status" value="1"/>
</dbReference>
<dbReference type="Pfam" id="PF01425">
    <property type="entry name" value="Amidase"/>
    <property type="match status" value="1"/>
</dbReference>
<dbReference type="SUPFAM" id="SSF75304">
    <property type="entry name" value="Amidase signature (AS) enzymes"/>
    <property type="match status" value="1"/>
</dbReference>
<dbReference type="PROSITE" id="PS00571">
    <property type="entry name" value="AMIDASES"/>
    <property type="match status" value="1"/>
</dbReference>
<evidence type="ECO:0000255" key="1">
    <source>
        <dbReference type="HAMAP-Rule" id="MF_00120"/>
    </source>
</evidence>
<evidence type="ECO:0000305" key="2"/>
<organism>
    <name type="scientific">Tropheryma whipplei (strain TW08/27)</name>
    <name type="common">Whipple's bacillus</name>
    <dbReference type="NCBI Taxonomy" id="218496"/>
    <lineage>
        <taxon>Bacteria</taxon>
        <taxon>Bacillati</taxon>
        <taxon>Actinomycetota</taxon>
        <taxon>Actinomycetes</taxon>
        <taxon>Micrococcales</taxon>
        <taxon>Tropherymataceae</taxon>
        <taxon>Tropheryma</taxon>
    </lineage>
</organism>
<protein>
    <recommendedName>
        <fullName evidence="1">Glutamyl-tRNA(Gln) amidotransferase subunit A</fullName>
        <shortName evidence="1">Glu-ADT subunit A</shortName>
        <ecNumber evidence="1">6.3.5.7</ecNumber>
    </recommendedName>
</protein>
<comment type="function">
    <text evidence="1">Allows the formation of correctly charged Gln-tRNA(Gln) through the transamidation of misacylated Glu-tRNA(Gln) in organisms which lack glutaminyl-tRNA synthetase. The reaction takes place in the presence of glutamine and ATP through an activated gamma-phospho-Glu-tRNA(Gln).</text>
</comment>
<comment type="catalytic activity">
    <reaction evidence="1">
        <text>L-glutamyl-tRNA(Gln) + L-glutamine + ATP + H2O = L-glutaminyl-tRNA(Gln) + L-glutamate + ADP + phosphate + H(+)</text>
        <dbReference type="Rhea" id="RHEA:17521"/>
        <dbReference type="Rhea" id="RHEA-COMP:9681"/>
        <dbReference type="Rhea" id="RHEA-COMP:9684"/>
        <dbReference type="ChEBI" id="CHEBI:15377"/>
        <dbReference type="ChEBI" id="CHEBI:15378"/>
        <dbReference type="ChEBI" id="CHEBI:29985"/>
        <dbReference type="ChEBI" id="CHEBI:30616"/>
        <dbReference type="ChEBI" id="CHEBI:43474"/>
        <dbReference type="ChEBI" id="CHEBI:58359"/>
        <dbReference type="ChEBI" id="CHEBI:78520"/>
        <dbReference type="ChEBI" id="CHEBI:78521"/>
        <dbReference type="ChEBI" id="CHEBI:456216"/>
        <dbReference type="EC" id="6.3.5.7"/>
    </reaction>
</comment>
<comment type="subunit">
    <text evidence="1">Heterotrimer of A, B and C subunits.</text>
</comment>
<comment type="similarity">
    <text evidence="1">Belongs to the amidase family. GatA subfamily.</text>
</comment>
<comment type="sequence caution" evidence="2">
    <conflict type="erroneous initiation">
        <sequence resource="EMBL-CDS" id="CAD67028"/>
    </conflict>
</comment>
<accession>Q83HX2</accession>
<name>GATA_TROW8</name>